<sequence length="222" mass="24079">MTETLPTPVLDTAQARVLGCLIEKEATTPDAYPLTVNAAQVAANQKTAREPVLTLQTGKVHHALRQLETLGLVRQQFSSRAERYEHRLGSALDLTRQQVAVIGLLLLRGPQTLGELFARSERLARFNDSDDVRHHLERLIQRGLAVQLPRASGQREDRYAHLLSGELDLDALQAAAARAAPSARSGADSSELEARVLSLETTVAELQDALSALQARLDAAGA</sequence>
<evidence type="ECO:0000255" key="1">
    <source>
        <dbReference type="HAMAP-Rule" id="MF_01584"/>
    </source>
</evidence>
<name>Y4348_XANCB</name>
<accession>B0RZ32</accession>
<comment type="similarity">
    <text evidence="1">Belongs to the UPF0502 family.</text>
</comment>
<proteinExistence type="inferred from homology"/>
<dbReference type="EMBL" id="AM920689">
    <property type="protein sequence ID" value="CAP53718.1"/>
    <property type="molecule type" value="Genomic_DNA"/>
</dbReference>
<dbReference type="SMR" id="B0RZ32"/>
<dbReference type="KEGG" id="xca:xcc-b100_4348"/>
<dbReference type="HOGENOM" id="CLU_057831_2_0_6"/>
<dbReference type="Proteomes" id="UP000001188">
    <property type="component" value="Chromosome"/>
</dbReference>
<dbReference type="Gene3D" id="1.10.10.10">
    <property type="entry name" value="Winged helix-like DNA-binding domain superfamily/Winged helix DNA-binding domain"/>
    <property type="match status" value="2"/>
</dbReference>
<dbReference type="HAMAP" id="MF_01584">
    <property type="entry name" value="UPF0502"/>
    <property type="match status" value="1"/>
</dbReference>
<dbReference type="InterPro" id="IPR007432">
    <property type="entry name" value="DUF480"/>
</dbReference>
<dbReference type="InterPro" id="IPR036388">
    <property type="entry name" value="WH-like_DNA-bd_sf"/>
</dbReference>
<dbReference type="InterPro" id="IPR036390">
    <property type="entry name" value="WH_DNA-bd_sf"/>
</dbReference>
<dbReference type="PANTHER" id="PTHR38768">
    <property type="entry name" value="UPF0502 PROTEIN YCEH"/>
    <property type="match status" value="1"/>
</dbReference>
<dbReference type="PANTHER" id="PTHR38768:SF1">
    <property type="entry name" value="UPF0502 PROTEIN YCEH"/>
    <property type="match status" value="1"/>
</dbReference>
<dbReference type="Pfam" id="PF04337">
    <property type="entry name" value="DUF480"/>
    <property type="match status" value="1"/>
</dbReference>
<dbReference type="SUPFAM" id="SSF46785">
    <property type="entry name" value="Winged helix' DNA-binding domain"/>
    <property type="match status" value="2"/>
</dbReference>
<protein>
    <recommendedName>
        <fullName evidence="1">UPF0502 protein xcc-b100_4348</fullName>
    </recommendedName>
</protein>
<reference key="1">
    <citation type="journal article" date="2008" name="J. Biotechnol.">
        <title>The genome of Xanthomonas campestris pv. campestris B100 and its use for the reconstruction of metabolic pathways involved in xanthan biosynthesis.</title>
        <authorList>
            <person name="Vorhoelter F.-J."/>
            <person name="Schneiker S."/>
            <person name="Goesmann A."/>
            <person name="Krause L."/>
            <person name="Bekel T."/>
            <person name="Kaiser O."/>
            <person name="Linke B."/>
            <person name="Patschkowski T."/>
            <person name="Rueckert C."/>
            <person name="Schmid J."/>
            <person name="Sidhu V.K."/>
            <person name="Sieber V."/>
            <person name="Tauch A."/>
            <person name="Watt S.A."/>
            <person name="Weisshaar B."/>
            <person name="Becker A."/>
            <person name="Niehaus K."/>
            <person name="Puehler A."/>
        </authorList>
    </citation>
    <scope>NUCLEOTIDE SEQUENCE [LARGE SCALE GENOMIC DNA]</scope>
    <source>
        <strain>B100</strain>
    </source>
</reference>
<organism>
    <name type="scientific">Xanthomonas campestris pv. campestris (strain B100)</name>
    <dbReference type="NCBI Taxonomy" id="509169"/>
    <lineage>
        <taxon>Bacteria</taxon>
        <taxon>Pseudomonadati</taxon>
        <taxon>Pseudomonadota</taxon>
        <taxon>Gammaproteobacteria</taxon>
        <taxon>Lysobacterales</taxon>
        <taxon>Lysobacteraceae</taxon>
        <taxon>Xanthomonas</taxon>
    </lineage>
</organism>
<feature type="chain" id="PRO_1000201261" description="UPF0502 protein xcc-b100_4348">
    <location>
        <begin position="1"/>
        <end position="222"/>
    </location>
</feature>
<gene>
    <name type="ordered locus">xcc-b100_4348</name>
</gene>